<sequence length="435" mass="47386">MSIITDVYAREVLDSRGNPTLEVEVYTESGAFGRGMVPSGASTGEHEAVELRDGDKSRYLGLGTQKAVDNVNNIIAEAIIGYDVRDQQAIDRAMITLDGTPNKGKLGANAILGVSIAVARAAADYLEVPLYTYLGGFNTKVLPTPMMNIINGGSHSDAPIAFQEFMIMPVGAPTFKEGLRWGAEVFHALKKILKERGLVTAVGDEGGFAPKFEGTEDGVETILKAIEAAGYEAGENGIMIGFDCASSEFYDKERKVYDYTKFEGEGAAVRTSAEQVDYLEELVNKYPIITIEDGMDENDWDGWKVLTERLGKRVQLVGDDFFVTNTEYLARGIKENAANSILIKVNQIGTLTETFEAIEMAKEAGYTAVVSHRSGETEDSTIADIAVATNAGQIKTGSLSRTDRIAKYNQLLRIEDQLGEVAQYKGIKSFYNLKK</sequence>
<evidence type="ECO:0000255" key="1">
    <source>
        <dbReference type="HAMAP-Rule" id="MF_00318"/>
    </source>
</evidence>
<protein>
    <recommendedName>
        <fullName evidence="1">Enolase</fullName>
        <ecNumber evidence="1">4.2.1.11</ecNumber>
    </recommendedName>
    <alternativeName>
        <fullName evidence="1">2-phospho-D-glycerate hydro-lyase</fullName>
    </alternativeName>
    <alternativeName>
        <fullName evidence="1">2-phosphoglycerate dehydratase</fullName>
    </alternativeName>
</protein>
<organism>
    <name type="scientific">Streptococcus pyogenes serotype M12 (strain MGAS9429)</name>
    <dbReference type="NCBI Taxonomy" id="370551"/>
    <lineage>
        <taxon>Bacteria</taxon>
        <taxon>Bacillati</taxon>
        <taxon>Bacillota</taxon>
        <taxon>Bacilli</taxon>
        <taxon>Lactobacillales</taxon>
        <taxon>Streptococcaceae</taxon>
        <taxon>Streptococcus</taxon>
    </lineage>
</organism>
<comment type="function">
    <text evidence="1">Catalyzes the reversible conversion of 2-phosphoglycerate (2-PG) into phosphoenolpyruvate (PEP). It is essential for the degradation of carbohydrates via glycolysis.</text>
</comment>
<comment type="catalytic activity">
    <reaction evidence="1">
        <text>(2R)-2-phosphoglycerate = phosphoenolpyruvate + H2O</text>
        <dbReference type="Rhea" id="RHEA:10164"/>
        <dbReference type="ChEBI" id="CHEBI:15377"/>
        <dbReference type="ChEBI" id="CHEBI:58289"/>
        <dbReference type="ChEBI" id="CHEBI:58702"/>
        <dbReference type="EC" id="4.2.1.11"/>
    </reaction>
</comment>
<comment type="cofactor">
    <cofactor evidence="1">
        <name>Mg(2+)</name>
        <dbReference type="ChEBI" id="CHEBI:18420"/>
    </cofactor>
    <text evidence="1">Binds a second Mg(2+) ion via substrate during catalysis.</text>
</comment>
<comment type="pathway">
    <text evidence="1">Carbohydrate degradation; glycolysis; pyruvate from D-glyceraldehyde 3-phosphate: step 4/5.</text>
</comment>
<comment type="subcellular location">
    <subcellularLocation>
        <location evidence="1">Cytoplasm</location>
    </subcellularLocation>
    <subcellularLocation>
        <location evidence="1">Secreted</location>
    </subcellularLocation>
    <subcellularLocation>
        <location evidence="1">Cell surface</location>
    </subcellularLocation>
    <text evidence="1">Fractions of enolase are present in both the cytoplasm and on the cell surface.</text>
</comment>
<comment type="similarity">
    <text evidence="1">Belongs to the enolase family.</text>
</comment>
<feature type="chain" id="PRO_0000267117" description="Enolase">
    <location>
        <begin position="1"/>
        <end position="435"/>
    </location>
</feature>
<feature type="active site" description="Proton donor" evidence="1">
    <location>
        <position position="205"/>
    </location>
</feature>
<feature type="active site" description="Proton acceptor" evidence="1">
    <location>
        <position position="344"/>
    </location>
</feature>
<feature type="binding site" evidence="1">
    <location>
        <position position="163"/>
    </location>
    <ligand>
        <name>(2R)-2-phosphoglycerate</name>
        <dbReference type="ChEBI" id="CHEBI:58289"/>
    </ligand>
</feature>
<feature type="binding site" evidence="1">
    <location>
        <position position="243"/>
    </location>
    <ligand>
        <name>Mg(2+)</name>
        <dbReference type="ChEBI" id="CHEBI:18420"/>
    </ligand>
</feature>
<feature type="binding site" evidence="1">
    <location>
        <position position="292"/>
    </location>
    <ligand>
        <name>Mg(2+)</name>
        <dbReference type="ChEBI" id="CHEBI:18420"/>
    </ligand>
</feature>
<feature type="binding site" evidence="1">
    <location>
        <position position="319"/>
    </location>
    <ligand>
        <name>Mg(2+)</name>
        <dbReference type="ChEBI" id="CHEBI:18420"/>
    </ligand>
</feature>
<feature type="binding site" evidence="1">
    <location>
        <position position="344"/>
    </location>
    <ligand>
        <name>(2R)-2-phosphoglycerate</name>
        <dbReference type="ChEBI" id="CHEBI:58289"/>
    </ligand>
</feature>
<feature type="binding site" evidence="1">
    <location>
        <position position="373"/>
    </location>
    <ligand>
        <name>(2R)-2-phosphoglycerate</name>
        <dbReference type="ChEBI" id="CHEBI:58289"/>
    </ligand>
</feature>
<feature type="binding site" evidence="1">
    <location>
        <position position="374"/>
    </location>
    <ligand>
        <name>(2R)-2-phosphoglycerate</name>
        <dbReference type="ChEBI" id="CHEBI:58289"/>
    </ligand>
</feature>
<feature type="binding site" evidence="1">
    <location>
        <position position="395"/>
    </location>
    <ligand>
        <name>(2R)-2-phosphoglycerate</name>
        <dbReference type="ChEBI" id="CHEBI:58289"/>
    </ligand>
</feature>
<name>ENO_STRPC</name>
<accession>Q1JML5</accession>
<keyword id="KW-0963">Cytoplasm</keyword>
<keyword id="KW-0324">Glycolysis</keyword>
<keyword id="KW-0456">Lyase</keyword>
<keyword id="KW-0460">Magnesium</keyword>
<keyword id="KW-0479">Metal-binding</keyword>
<keyword id="KW-0964">Secreted</keyword>
<dbReference type="EC" id="4.2.1.11" evidence="1"/>
<dbReference type="EMBL" id="CP000259">
    <property type="protein sequence ID" value="ABF31797.1"/>
    <property type="molecule type" value="Genomic_DNA"/>
</dbReference>
<dbReference type="RefSeq" id="WP_002990448.1">
    <property type="nucleotide sequence ID" value="NC_008021.1"/>
</dbReference>
<dbReference type="SMR" id="Q1JML5"/>
<dbReference type="MoonProt" id="Q1JML5"/>
<dbReference type="KEGG" id="spk:MGAS9429_Spy0609"/>
<dbReference type="HOGENOM" id="CLU_031223_2_1_9"/>
<dbReference type="UniPathway" id="UPA00109">
    <property type="reaction ID" value="UER00187"/>
</dbReference>
<dbReference type="Proteomes" id="UP000002433">
    <property type="component" value="Chromosome"/>
</dbReference>
<dbReference type="GO" id="GO:0009986">
    <property type="term" value="C:cell surface"/>
    <property type="evidence" value="ECO:0007669"/>
    <property type="project" value="UniProtKB-SubCell"/>
</dbReference>
<dbReference type="GO" id="GO:0005576">
    <property type="term" value="C:extracellular region"/>
    <property type="evidence" value="ECO:0007669"/>
    <property type="project" value="UniProtKB-SubCell"/>
</dbReference>
<dbReference type="GO" id="GO:0009274">
    <property type="term" value="C:peptidoglycan-based cell wall"/>
    <property type="evidence" value="ECO:0007669"/>
    <property type="project" value="UniProtKB-ARBA"/>
</dbReference>
<dbReference type="GO" id="GO:0000015">
    <property type="term" value="C:phosphopyruvate hydratase complex"/>
    <property type="evidence" value="ECO:0007669"/>
    <property type="project" value="InterPro"/>
</dbReference>
<dbReference type="GO" id="GO:0000287">
    <property type="term" value="F:magnesium ion binding"/>
    <property type="evidence" value="ECO:0007669"/>
    <property type="project" value="UniProtKB-UniRule"/>
</dbReference>
<dbReference type="GO" id="GO:0004634">
    <property type="term" value="F:phosphopyruvate hydratase activity"/>
    <property type="evidence" value="ECO:0007669"/>
    <property type="project" value="UniProtKB-UniRule"/>
</dbReference>
<dbReference type="GO" id="GO:0006096">
    <property type="term" value="P:glycolytic process"/>
    <property type="evidence" value="ECO:0007669"/>
    <property type="project" value="UniProtKB-UniRule"/>
</dbReference>
<dbReference type="CDD" id="cd03313">
    <property type="entry name" value="enolase"/>
    <property type="match status" value="1"/>
</dbReference>
<dbReference type="FunFam" id="3.20.20.120:FF:000001">
    <property type="entry name" value="Enolase"/>
    <property type="match status" value="1"/>
</dbReference>
<dbReference type="FunFam" id="3.30.390.10:FF:000001">
    <property type="entry name" value="Enolase"/>
    <property type="match status" value="1"/>
</dbReference>
<dbReference type="Gene3D" id="3.20.20.120">
    <property type="entry name" value="Enolase-like C-terminal domain"/>
    <property type="match status" value="1"/>
</dbReference>
<dbReference type="Gene3D" id="3.30.390.10">
    <property type="entry name" value="Enolase-like, N-terminal domain"/>
    <property type="match status" value="1"/>
</dbReference>
<dbReference type="HAMAP" id="MF_00318">
    <property type="entry name" value="Enolase"/>
    <property type="match status" value="1"/>
</dbReference>
<dbReference type="InterPro" id="IPR000941">
    <property type="entry name" value="Enolase"/>
</dbReference>
<dbReference type="InterPro" id="IPR036849">
    <property type="entry name" value="Enolase-like_C_sf"/>
</dbReference>
<dbReference type="InterPro" id="IPR029017">
    <property type="entry name" value="Enolase-like_N"/>
</dbReference>
<dbReference type="InterPro" id="IPR020810">
    <property type="entry name" value="Enolase_C"/>
</dbReference>
<dbReference type="InterPro" id="IPR020809">
    <property type="entry name" value="Enolase_CS"/>
</dbReference>
<dbReference type="InterPro" id="IPR020811">
    <property type="entry name" value="Enolase_N"/>
</dbReference>
<dbReference type="NCBIfam" id="TIGR01060">
    <property type="entry name" value="eno"/>
    <property type="match status" value="1"/>
</dbReference>
<dbReference type="PANTHER" id="PTHR11902">
    <property type="entry name" value="ENOLASE"/>
    <property type="match status" value="1"/>
</dbReference>
<dbReference type="PANTHER" id="PTHR11902:SF1">
    <property type="entry name" value="ENOLASE"/>
    <property type="match status" value="1"/>
</dbReference>
<dbReference type="Pfam" id="PF00113">
    <property type="entry name" value="Enolase_C"/>
    <property type="match status" value="1"/>
</dbReference>
<dbReference type="Pfam" id="PF03952">
    <property type="entry name" value="Enolase_N"/>
    <property type="match status" value="1"/>
</dbReference>
<dbReference type="PIRSF" id="PIRSF001400">
    <property type="entry name" value="Enolase"/>
    <property type="match status" value="1"/>
</dbReference>
<dbReference type="PRINTS" id="PR00148">
    <property type="entry name" value="ENOLASE"/>
</dbReference>
<dbReference type="SFLD" id="SFLDF00002">
    <property type="entry name" value="enolase"/>
    <property type="match status" value="1"/>
</dbReference>
<dbReference type="SFLD" id="SFLDG00178">
    <property type="entry name" value="enolase"/>
    <property type="match status" value="1"/>
</dbReference>
<dbReference type="SMART" id="SM01192">
    <property type="entry name" value="Enolase_C"/>
    <property type="match status" value="1"/>
</dbReference>
<dbReference type="SMART" id="SM01193">
    <property type="entry name" value="Enolase_N"/>
    <property type="match status" value="1"/>
</dbReference>
<dbReference type="SUPFAM" id="SSF51604">
    <property type="entry name" value="Enolase C-terminal domain-like"/>
    <property type="match status" value="1"/>
</dbReference>
<dbReference type="SUPFAM" id="SSF54826">
    <property type="entry name" value="Enolase N-terminal domain-like"/>
    <property type="match status" value="1"/>
</dbReference>
<dbReference type="PROSITE" id="PS00164">
    <property type="entry name" value="ENOLASE"/>
    <property type="match status" value="1"/>
</dbReference>
<proteinExistence type="inferred from homology"/>
<reference key="1">
    <citation type="journal article" date="2006" name="Proc. Natl. Acad. Sci. U.S.A.">
        <title>Molecular genetic anatomy of inter- and intraserotype variation in the human bacterial pathogen group A Streptococcus.</title>
        <authorList>
            <person name="Beres S.B."/>
            <person name="Richter E.W."/>
            <person name="Nagiec M.J."/>
            <person name="Sumby P."/>
            <person name="Porcella S.F."/>
            <person name="DeLeo F.R."/>
            <person name="Musser J.M."/>
        </authorList>
    </citation>
    <scope>NUCLEOTIDE SEQUENCE [LARGE SCALE GENOMIC DNA]</scope>
    <source>
        <strain>MGAS9429</strain>
    </source>
</reference>
<gene>
    <name evidence="1" type="primary">eno</name>
    <name type="ordered locus">MGAS9429_Spy0609</name>
</gene>